<keyword id="KW-0004">4Fe-4S</keyword>
<keyword id="KW-0067">ATP-binding</keyword>
<keyword id="KW-0227">DNA damage</keyword>
<keyword id="KW-0234">DNA repair</keyword>
<keyword id="KW-0238">DNA-binding</keyword>
<keyword id="KW-0269">Exonuclease</keyword>
<keyword id="KW-0347">Helicase</keyword>
<keyword id="KW-0378">Hydrolase</keyword>
<keyword id="KW-0408">Iron</keyword>
<keyword id="KW-0411">Iron-sulfur</keyword>
<keyword id="KW-0479">Metal-binding</keyword>
<keyword id="KW-0540">Nuclease</keyword>
<keyword id="KW-0547">Nucleotide-binding</keyword>
<keyword id="KW-1185">Reference proteome</keyword>
<evidence type="ECO:0000255" key="1">
    <source>
        <dbReference type="HAMAP-Rule" id="MF_01452"/>
    </source>
</evidence>
<dbReference type="EC" id="3.1.-.-" evidence="1"/>
<dbReference type="EMBL" id="BA000028">
    <property type="protein sequence ID" value="BAC13137.1"/>
    <property type="molecule type" value="Genomic_DNA"/>
</dbReference>
<dbReference type="RefSeq" id="WP_011065580.1">
    <property type="nucleotide sequence ID" value="NC_004193.1"/>
</dbReference>
<dbReference type="SMR" id="Q8ERW6"/>
<dbReference type="STRING" id="221109.gene:10733420"/>
<dbReference type="KEGG" id="oih:OB1181"/>
<dbReference type="eggNOG" id="COG3857">
    <property type="taxonomic scope" value="Bacteria"/>
</dbReference>
<dbReference type="HOGENOM" id="CLU_007838_0_0_9"/>
<dbReference type="OrthoDB" id="9758506at2"/>
<dbReference type="PhylomeDB" id="Q8ERW6"/>
<dbReference type="Proteomes" id="UP000000822">
    <property type="component" value="Chromosome"/>
</dbReference>
<dbReference type="GO" id="GO:0051539">
    <property type="term" value="F:4 iron, 4 sulfur cluster binding"/>
    <property type="evidence" value="ECO:0007669"/>
    <property type="project" value="UniProtKB-KW"/>
</dbReference>
<dbReference type="GO" id="GO:0008409">
    <property type="term" value="F:5'-3' exonuclease activity"/>
    <property type="evidence" value="ECO:0007669"/>
    <property type="project" value="UniProtKB-UniRule"/>
</dbReference>
<dbReference type="GO" id="GO:0005524">
    <property type="term" value="F:ATP binding"/>
    <property type="evidence" value="ECO:0007669"/>
    <property type="project" value="UniProtKB-UniRule"/>
</dbReference>
<dbReference type="GO" id="GO:0003690">
    <property type="term" value="F:double-stranded DNA binding"/>
    <property type="evidence" value="ECO:0007669"/>
    <property type="project" value="UniProtKB-UniRule"/>
</dbReference>
<dbReference type="GO" id="GO:0004386">
    <property type="term" value="F:helicase activity"/>
    <property type="evidence" value="ECO:0007669"/>
    <property type="project" value="UniProtKB-KW"/>
</dbReference>
<dbReference type="GO" id="GO:0046872">
    <property type="term" value="F:metal ion binding"/>
    <property type="evidence" value="ECO:0007669"/>
    <property type="project" value="UniProtKB-KW"/>
</dbReference>
<dbReference type="GO" id="GO:0000724">
    <property type="term" value="P:double-strand break repair via homologous recombination"/>
    <property type="evidence" value="ECO:0007669"/>
    <property type="project" value="UniProtKB-UniRule"/>
</dbReference>
<dbReference type="Gene3D" id="3.90.320.10">
    <property type="match status" value="1"/>
</dbReference>
<dbReference type="Gene3D" id="6.10.140.1030">
    <property type="match status" value="1"/>
</dbReference>
<dbReference type="Gene3D" id="3.40.50.300">
    <property type="entry name" value="P-loop containing nucleotide triphosphate hydrolases"/>
    <property type="match status" value="3"/>
</dbReference>
<dbReference type="HAMAP" id="MF_01452">
    <property type="entry name" value="AddB_type1"/>
    <property type="match status" value="1"/>
</dbReference>
<dbReference type="InterPro" id="IPR049035">
    <property type="entry name" value="ADDB_N"/>
</dbReference>
<dbReference type="InterPro" id="IPR014140">
    <property type="entry name" value="DNA_helicase_suAddB"/>
</dbReference>
<dbReference type="InterPro" id="IPR014017">
    <property type="entry name" value="DNA_helicase_UvrD-like_C"/>
</dbReference>
<dbReference type="InterPro" id="IPR027417">
    <property type="entry name" value="P-loop_NTPase"/>
</dbReference>
<dbReference type="InterPro" id="IPR011604">
    <property type="entry name" value="PDDEXK-like_dom_sf"/>
</dbReference>
<dbReference type="InterPro" id="IPR038726">
    <property type="entry name" value="PDDEXK_AddAB-type"/>
</dbReference>
<dbReference type="NCBIfam" id="TIGR02773">
    <property type="entry name" value="addB_Gpos"/>
    <property type="match status" value="1"/>
</dbReference>
<dbReference type="PANTHER" id="PTHR30591">
    <property type="entry name" value="RECBCD ENZYME SUBUNIT RECC"/>
    <property type="match status" value="1"/>
</dbReference>
<dbReference type="PANTHER" id="PTHR30591:SF1">
    <property type="entry name" value="RECBCD ENZYME SUBUNIT RECC"/>
    <property type="match status" value="1"/>
</dbReference>
<dbReference type="Pfam" id="PF21445">
    <property type="entry name" value="ADDB_N"/>
    <property type="match status" value="1"/>
</dbReference>
<dbReference type="Pfam" id="PF12705">
    <property type="entry name" value="PDDEXK_1"/>
    <property type="match status" value="1"/>
</dbReference>
<dbReference type="SUPFAM" id="SSF52540">
    <property type="entry name" value="P-loop containing nucleoside triphosphate hydrolases"/>
    <property type="match status" value="1"/>
</dbReference>
<dbReference type="PROSITE" id="PS51198">
    <property type="entry name" value="UVRD_HELICASE_ATP_BIND"/>
    <property type="match status" value="1"/>
</dbReference>
<dbReference type="PROSITE" id="PS51217">
    <property type="entry name" value="UVRD_HELICASE_CTER"/>
    <property type="match status" value="1"/>
</dbReference>
<proteinExistence type="inferred from homology"/>
<sequence>MGMRFILGRSGTNKSEVILKEIKQKISTNPIGPSIFYIVPDQMTFQQEVALFSDSETNGSIRAQIVSFSRLAWRVLQETGGGTKQFISSVGIQMMLRKIIEEKQGDWNAFQKALKKQGFLGQLETMLTELKRYEITPDDLRMQQSHLTDFVHQSPSEQGLTRKLSDLIYIYETFIYALQGTYVDSEDQLQLLIQQIKQSSILNNADIYIDGFHSFTPQEQSVLTELMKTSNSITVALTLDDPWKEDASELDLFYQPSQTYHVLKQLAWEAGVPVEDPIILDTLEGNFQNRPYFAHMEKYFDSRPAPAYEGEVPIEIFEAVHPRAEVEGIAQQVLELIRDNRYRYRDIALLIRQPEVYHDLIETIFNDYELPVFIDEKRPMLHHPLIELIRSILEVVQGNWRNDAIFRVLKTGLIPSADDEFPLTMDSIDQLENYVIEFGIRSRHQWIGENKWKYQRFRGFDSSAQTDRERELQESMNRYRDQVISAIATVDEQLRAATTVKDLCIAMYQWLEELKIPDQLEVTRKYYDDQGLPEKGREQEQVWDAVIQLFDEMVEIAGEEKMDLSVFQVALDAGIETLQFSHVPPSMDHIIVGTIDRSRMSNIRCAFLLGVNEGIWPMKPTSDGMIDEAERLLLEQNGLKLADTSERQLLDDWFYMYLAFTVAKDRLKISYLLSDEEGKAKMPSQLIHRVEELFPATKNHILLQDPEDESNTRRFVSTELKSRSALTAQLAKFKKGYPIDPIWWEVYQWYVEHHPQGGTTHRVLQGLHYENKPESLQKDTVEQLYPKRIQASVSRLETYYRCSYQHFAKYSLNLEERRTYKLDAPDIGQLFHEALKKITEWIHAEGNDFSALTKSQSSHYANRAVTELSPVLQHQILHSSNRYAYIQKKLEEVIARATFVLGEQARLSHFSPVGLELGFGDGNNQIPSLSMLLENGYELVLRGRIDRVDKAELENNLYLRIIDYKSSSKGLDLTEVYYGIALQMLAYLDVVLTHSEKWLGQQADPAGVLYFHVHNPMISAKGSMTEADIEEELFKQYKMQGLLLSNEEIVKMMDSSLETGSSQIVPAALKKNGGFYSYSKIADQSTFETLQNHIHQLLKSAGIDITNGSVDVNPYQHKQQKACTYCPFHSVCQFDPVLEENNYRKFADIKENDLLQLFEREGENNG</sequence>
<protein>
    <recommendedName>
        <fullName evidence="1">ATP-dependent helicase/deoxyribonuclease subunit B</fullName>
        <ecNumber evidence="1">3.1.-.-</ecNumber>
    </recommendedName>
    <alternativeName>
        <fullName evidence="1">ATP-dependent helicase/nuclease subunit AddB</fullName>
    </alternativeName>
</protein>
<reference key="1">
    <citation type="journal article" date="2002" name="Nucleic Acids Res.">
        <title>Genome sequence of Oceanobacillus iheyensis isolated from the Iheya Ridge and its unexpected adaptive capabilities to extreme environments.</title>
        <authorList>
            <person name="Takami H."/>
            <person name="Takaki Y."/>
            <person name="Uchiyama I."/>
        </authorList>
    </citation>
    <scope>NUCLEOTIDE SEQUENCE [LARGE SCALE GENOMIC DNA]</scope>
    <source>
        <strain>DSM 14371 / CIP 107618 / JCM 11309 / KCTC 3954 / HTE831</strain>
    </source>
</reference>
<name>ADDB_OCEIH</name>
<organism>
    <name type="scientific">Oceanobacillus iheyensis (strain DSM 14371 / CIP 107618 / JCM 11309 / KCTC 3954 / HTE831)</name>
    <dbReference type="NCBI Taxonomy" id="221109"/>
    <lineage>
        <taxon>Bacteria</taxon>
        <taxon>Bacillati</taxon>
        <taxon>Bacillota</taxon>
        <taxon>Bacilli</taxon>
        <taxon>Bacillales</taxon>
        <taxon>Bacillaceae</taxon>
        <taxon>Oceanobacillus</taxon>
    </lineage>
</organism>
<accession>Q8ERW6</accession>
<gene>
    <name evidence="1" type="primary">addB</name>
    <name type="ordered locus">OB1181</name>
</gene>
<comment type="function">
    <text evidence="1">The heterodimer acts as both an ATP-dependent DNA helicase and an ATP-dependent, dual-direction single-stranded exonuclease. Recognizes the chi site generating a DNA molecule suitable for the initiation of homologous recombination. The AddB subunit has 5' -&gt; 3' nuclease activity but not helicase activity.</text>
</comment>
<comment type="cofactor">
    <cofactor evidence="1">
        <name>Mg(2+)</name>
        <dbReference type="ChEBI" id="CHEBI:18420"/>
    </cofactor>
</comment>
<comment type="cofactor">
    <cofactor evidence="1">
        <name>[4Fe-4S] cluster</name>
        <dbReference type="ChEBI" id="CHEBI:49883"/>
    </cofactor>
    <text evidence="1">Binds 1 [4Fe-4S] cluster.</text>
</comment>
<comment type="subunit">
    <text evidence="1">Heterodimer of AddA and AddB.</text>
</comment>
<comment type="miscellaneous">
    <text evidence="1">Despite having conserved helicase domains, this subunit does not have helicase activity.</text>
</comment>
<comment type="similarity">
    <text evidence="1">Belongs to the helicase family. AddB/RexB type 1 subfamily.</text>
</comment>
<feature type="chain" id="PRO_0000379202" description="ATP-dependent helicase/deoxyribonuclease subunit B">
    <location>
        <begin position="1"/>
        <end position="1166"/>
    </location>
</feature>
<feature type="domain" description="UvrD-like helicase ATP-binding" evidence="1">
    <location>
        <begin position="1"/>
        <end position="290"/>
    </location>
</feature>
<feature type="domain" description="UvrD-like helicase C-terminal" evidence="1">
    <location>
        <begin position="283"/>
        <end position="588"/>
    </location>
</feature>
<feature type="binding site" evidence="1">
    <location>
        <begin position="8"/>
        <end position="15"/>
    </location>
    <ligand>
        <name>ATP</name>
        <dbReference type="ChEBI" id="CHEBI:30616"/>
    </ligand>
</feature>
<feature type="binding site" evidence="1">
    <location>
        <position position="802"/>
    </location>
    <ligand>
        <name>[4Fe-4S] cluster</name>
        <dbReference type="ChEBI" id="CHEBI:49883"/>
    </ligand>
</feature>
<feature type="binding site" evidence="1">
    <location>
        <position position="1123"/>
    </location>
    <ligand>
        <name>[4Fe-4S] cluster</name>
        <dbReference type="ChEBI" id="CHEBI:49883"/>
    </ligand>
</feature>
<feature type="binding site" evidence="1">
    <location>
        <position position="1126"/>
    </location>
    <ligand>
        <name>[4Fe-4S] cluster</name>
        <dbReference type="ChEBI" id="CHEBI:49883"/>
    </ligand>
</feature>
<feature type="binding site" evidence="1">
    <location>
        <position position="1132"/>
    </location>
    <ligand>
        <name>[4Fe-4S] cluster</name>
        <dbReference type="ChEBI" id="CHEBI:49883"/>
    </ligand>
</feature>